<feature type="chain" id="PRO_0000423939" description="2-oxoglutarate-dependent dioxygenase AOP3">
    <location>
        <begin position="1"/>
        <end position="410"/>
    </location>
</feature>
<feature type="domain" description="Fe2OG dioxygenase" evidence="1">
    <location>
        <begin position="258"/>
        <end position="355"/>
    </location>
</feature>
<feature type="binding site" evidence="1">
    <location>
        <position position="278"/>
    </location>
    <ligand>
        <name>Fe cation</name>
        <dbReference type="ChEBI" id="CHEBI:24875"/>
    </ligand>
</feature>
<feature type="binding site" evidence="1">
    <location>
        <position position="280"/>
    </location>
    <ligand>
        <name>Fe cation</name>
        <dbReference type="ChEBI" id="CHEBI:24875"/>
    </ligand>
</feature>
<feature type="binding site" evidence="1">
    <location>
        <position position="335"/>
    </location>
    <ligand>
        <name>Fe cation</name>
        <dbReference type="ChEBI" id="CHEBI:24875"/>
    </ligand>
</feature>
<feature type="binding site" evidence="1">
    <location>
        <position position="346"/>
    </location>
    <ligand>
        <name>2-oxoglutarate</name>
        <dbReference type="ChEBI" id="CHEBI:16810"/>
    </ligand>
</feature>
<protein>
    <recommendedName>
        <fullName>2-oxoglutarate-dependent dioxygenase AOP3</fullName>
        <ecNumber>1.14.11.-</ecNumber>
    </recommendedName>
</protein>
<name>AOP3L_ARATH</name>
<keyword id="KW-0223">Dioxygenase</keyword>
<keyword id="KW-0408">Iron</keyword>
<keyword id="KW-0479">Metal-binding</keyword>
<keyword id="KW-0560">Oxidoreductase</keyword>
<evidence type="ECO:0000255" key="1">
    <source>
        <dbReference type="PROSITE-ProRule" id="PRU00805"/>
    </source>
</evidence>
<evidence type="ECO:0000269" key="2">
    <source>
    </source>
</evidence>
<evidence type="ECO:0000305" key="3"/>
<evidence type="ECO:0000305" key="4">
    <source>
    </source>
</evidence>
<sequence>MGSCSPQLPLICLSDQTLKPGSSKWVKVRSDVRKALEDYGCFEAKIDQVSMELQGSVLKAMQELFALPTEAKQRNVCPKPFAGYFSHNGLSESFGIKDANILEKAHEFTQQLWPEGNKSIKMIQLYAEKLAELDMMVRRLILESYGIEYFIDEHLNSTYYRMRLMKYIARPDNDITAAVGANVDNGANDNADGDANVNDDGASIGVKVNVDVGDDVNDNDSVNIGVGVDINVETNVNGDLDAEANGDATAWVVGAVSGNASVGAKEANVDAELGLPSHTDKSLSGIIYQHQIDGLEVKTKEGKWIRVKPAPNTVIVIAGDALCALMNGRIPSPYHRVRVTERKKTRYAAALFSYPKEGYIIDSPKELVDEKHPRAFKPFDFVDLFNFYHTEAGRRAPSTLQAFCGVSAGK</sequence>
<proteinExistence type="evidence at transcript level"/>
<comment type="function">
    <text evidence="2">2-oxoglutarate-dependent dioxygenase involved in glucosinolates biosynthesis. Catalyzes the conversion of methylsulfinylalkyl glucosinolates to hydroxyalkyl glucosinolates.</text>
</comment>
<comment type="cofactor">
    <cofactor>
        <name>Fe(2+)</name>
        <dbReference type="ChEBI" id="CHEBI:29033"/>
    </cofactor>
    <text>Binds 1 Fe(2+) ion per subunit.</text>
</comment>
<comment type="similarity">
    <text evidence="3">Belongs to the iron/ascorbate-dependent oxidoreductase family.</text>
</comment>
<comment type="caution">
    <text evidence="4">AOP1, AOP2 and AOP3 are found in tandem and inverted duplications on chromosome IV and encode 2-oxoglutarate-dependent dioxygenases involved in glucosinolates biosynthesis. In cv. Columbia, AOP2 (AC Q9ZTA2) cDNA contains a 5-bp deletion that leads to a non-functional protein and AOP3 (AC Q9ZTA1) is not expressed. The functional and expressed alleles for AOP2 (AC Q945B5) and AOP3 (AC Q945B4) are found in cv. Cvi and cv. Landsberg erecta, respectively. No ecotype coexpresses both AOP2 and AOP3 genes. The catalytic role of AOP1 is still uncertain (PubMed:11251105).</text>
</comment>
<gene>
    <name type="primary">AOP3</name>
</gene>
<accession>Q945B4</accession>
<organism>
    <name type="scientific">Arabidopsis thaliana</name>
    <name type="common">Mouse-ear cress</name>
    <dbReference type="NCBI Taxonomy" id="3702"/>
    <lineage>
        <taxon>Eukaryota</taxon>
        <taxon>Viridiplantae</taxon>
        <taxon>Streptophyta</taxon>
        <taxon>Embryophyta</taxon>
        <taxon>Tracheophyta</taxon>
        <taxon>Spermatophyta</taxon>
        <taxon>Magnoliopsida</taxon>
        <taxon>eudicotyledons</taxon>
        <taxon>Gunneridae</taxon>
        <taxon>Pentapetalae</taxon>
        <taxon>rosids</taxon>
        <taxon>malvids</taxon>
        <taxon>Brassicales</taxon>
        <taxon>Brassicaceae</taxon>
        <taxon>Camelineae</taxon>
        <taxon>Arabidopsis</taxon>
    </lineage>
</organism>
<reference key="1">
    <citation type="journal article" date="2001" name="Plant Cell">
        <title>Gene duplication in the diversification of secondary metabolism: tandem 2-oxoglutarate-dependent dioxygenases control glucosinolate biosynthesis in Arabidopsis.</title>
        <authorList>
            <person name="Kliebenstein D.J."/>
            <person name="Lambrix V.M."/>
            <person name="Reichelt M."/>
            <person name="Gershenzon J."/>
            <person name="Mitchell-Olds T."/>
        </authorList>
    </citation>
    <scope>NUCLEOTIDE SEQUENCE [MRNA]</scope>
    <scope>FUNCTION</scope>
    <source>
        <strain>cv. Landsberg erecta</strain>
    </source>
</reference>
<dbReference type="EC" id="1.14.11.-"/>
<dbReference type="EMBL" id="AF417859">
    <property type="protein sequence ID" value="AAL14647.1"/>
    <property type="molecule type" value="mRNA"/>
</dbReference>
<dbReference type="SMR" id="Q945B4"/>
<dbReference type="HOGENOM" id="CLU_010119_3_0_1"/>
<dbReference type="ExpressionAtlas" id="Q945B4">
    <property type="expression patterns" value="baseline and differential"/>
</dbReference>
<dbReference type="GO" id="GO:0016706">
    <property type="term" value="F:2-oxoglutarate-dependent dioxygenase activity"/>
    <property type="evidence" value="ECO:0000314"/>
    <property type="project" value="UniProtKB"/>
</dbReference>
<dbReference type="GO" id="GO:0046872">
    <property type="term" value="F:metal ion binding"/>
    <property type="evidence" value="ECO:0007669"/>
    <property type="project" value="UniProtKB-KW"/>
</dbReference>
<dbReference type="GO" id="GO:0019761">
    <property type="term" value="P:glucosinolate biosynthetic process"/>
    <property type="evidence" value="ECO:0000314"/>
    <property type="project" value="UniProtKB"/>
</dbReference>
<dbReference type="FunFam" id="2.60.120.330:FF:000061">
    <property type="entry name" value="2-oxoglutarate-dependent dioxygenase AOP3"/>
    <property type="match status" value="1"/>
</dbReference>
<dbReference type="FunFam" id="2.60.120.330:FF:000062">
    <property type="entry name" value="2-oxoglutarate-dependent dioxygenase AOP3"/>
    <property type="match status" value="1"/>
</dbReference>
<dbReference type="Gene3D" id="2.60.120.330">
    <property type="entry name" value="B-lactam Antibiotic, Isopenicillin N Synthase, Chain"/>
    <property type="match status" value="2"/>
</dbReference>
<dbReference type="InterPro" id="IPR026992">
    <property type="entry name" value="DIOX_N"/>
</dbReference>
<dbReference type="InterPro" id="IPR044861">
    <property type="entry name" value="IPNS-like_FE2OG_OXY"/>
</dbReference>
<dbReference type="InterPro" id="IPR027443">
    <property type="entry name" value="IPNS-like_sf"/>
</dbReference>
<dbReference type="InterPro" id="IPR050231">
    <property type="entry name" value="Iron_ascorbate_oxido_reductase"/>
</dbReference>
<dbReference type="InterPro" id="IPR005123">
    <property type="entry name" value="Oxoglu/Fe-dep_dioxygenase_dom"/>
</dbReference>
<dbReference type="PANTHER" id="PTHR47990">
    <property type="entry name" value="2-OXOGLUTARATE (2OG) AND FE(II)-DEPENDENT OXYGENASE SUPERFAMILY PROTEIN-RELATED"/>
    <property type="match status" value="1"/>
</dbReference>
<dbReference type="Pfam" id="PF03171">
    <property type="entry name" value="2OG-FeII_Oxy"/>
    <property type="match status" value="1"/>
</dbReference>
<dbReference type="Pfam" id="PF14226">
    <property type="entry name" value="DIOX_N"/>
    <property type="match status" value="1"/>
</dbReference>
<dbReference type="PRINTS" id="PR00682">
    <property type="entry name" value="IPNSYNTHASE"/>
</dbReference>
<dbReference type="SUPFAM" id="SSF51197">
    <property type="entry name" value="Clavaminate synthase-like"/>
    <property type="match status" value="1"/>
</dbReference>
<dbReference type="PROSITE" id="PS51471">
    <property type="entry name" value="FE2OG_OXY"/>
    <property type="match status" value="1"/>
</dbReference>